<feature type="chain" id="PRO_0000369922" description="Serine hydroxymethyltransferase">
    <location>
        <begin position="1"/>
        <end position="417"/>
    </location>
</feature>
<feature type="binding site" evidence="1">
    <location>
        <position position="121"/>
    </location>
    <ligand>
        <name>(6S)-5,6,7,8-tetrahydrofolate</name>
        <dbReference type="ChEBI" id="CHEBI:57453"/>
    </ligand>
</feature>
<feature type="binding site" evidence="1">
    <location>
        <begin position="125"/>
        <end position="127"/>
    </location>
    <ligand>
        <name>(6S)-5,6,7,8-tetrahydrofolate</name>
        <dbReference type="ChEBI" id="CHEBI:57453"/>
    </ligand>
</feature>
<feature type="binding site" evidence="1">
    <location>
        <begin position="355"/>
        <end position="357"/>
    </location>
    <ligand>
        <name>(6S)-5,6,7,8-tetrahydrofolate</name>
        <dbReference type="ChEBI" id="CHEBI:57453"/>
    </ligand>
</feature>
<feature type="site" description="Plays an important role in substrate specificity" evidence="1">
    <location>
        <position position="228"/>
    </location>
</feature>
<feature type="modified residue" description="N6-acetyllysine" evidence="1">
    <location>
        <position position="54"/>
    </location>
</feature>
<feature type="modified residue" description="N6-(pyridoxal phosphate)lysine" evidence="1">
    <location>
        <position position="229"/>
    </location>
</feature>
<feature type="modified residue" description="N6-acetyllysine" evidence="1">
    <location>
        <position position="250"/>
    </location>
</feature>
<feature type="modified residue" description="N6-acetyllysine" evidence="1">
    <location>
        <position position="285"/>
    </location>
</feature>
<feature type="modified residue" description="N6-acetyllysine" evidence="1">
    <location>
        <position position="354"/>
    </location>
</feature>
<feature type="modified residue" description="N6-acetyllysine" evidence="1">
    <location>
        <position position="375"/>
    </location>
</feature>
<accession>Q1R8I4</accession>
<gene>
    <name evidence="1" type="primary">glyA</name>
    <name type="ordered locus">UTI89_C2870</name>
</gene>
<comment type="function">
    <text evidence="1">Catalyzes the reversible interconversion of serine and glycine with tetrahydrofolate (THF) serving as the one-carbon carrier. This reaction serves as the major source of one-carbon groups required for the biosynthesis of purines, thymidylate, methionine, and other important biomolecules. Also exhibits THF-independent aldolase activity toward beta-hydroxyamino acids, producing glycine and aldehydes, via a retro-aldol mechanism.</text>
</comment>
<comment type="catalytic activity">
    <reaction evidence="1">
        <text>(6R)-5,10-methylene-5,6,7,8-tetrahydrofolate + glycine + H2O = (6S)-5,6,7,8-tetrahydrofolate + L-serine</text>
        <dbReference type="Rhea" id="RHEA:15481"/>
        <dbReference type="ChEBI" id="CHEBI:15377"/>
        <dbReference type="ChEBI" id="CHEBI:15636"/>
        <dbReference type="ChEBI" id="CHEBI:33384"/>
        <dbReference type="ChEBI" id="CHEBI:57305"/>
        <dbReference type="ChEBI" id="CHEBI:57453"/>
        <dbReference type="EC" id="2.1.2.1"/>
    </reaction>
</comment>
<comment type="cofactor">
    <cofactor evidence="1">
        <name>pyridoxal 5'-phosphate</name>
        <dbReference type="ChEBI" id="CHEBI:597326"/>
    </cofactor>
</comment>
<comment type="pathway">
    <text evidence="1">One-carbon metabolism; tetrahydrofolate interconversion.</text>
</comment>
<comment type="pathway">
    <text evidence="1">Amino-acid biosynthesis; glycine biosynthesis; glycine from L-serine: step 1/1.</text>
</comment>
<comment type="subunit">
    <text evidence="1">Homodimer.</text>
</comment>
<comment type="subcellular location">
    <subcellularLocation>
        <location evidence="1">Cytoplasm</location>
    </subcellularLocation>
</comment>
<comment type="similarity">
    <text evidence="1">Belongs to the SHMT family.</text>
</comment>
<comment type="sequence caution" evidence="2">
    <conflict type="erroneous initiation">
        <sequence resource="EMBL-CDS" id="ABE08330"/>
    </conflict>
</comment>
<evidence type="ECO:0000255" key="1">
    <source>
        <dbReference type="HAMAP-Rule" id="MF_00051"/>
    </source>
</evidence>
<evidence type="ECO:0000305" key="2"/>
<name>GLYA_ECOUT</name>
<sequence length="417" mass="45317">MLKREMNIADYDAELWQAMEQEKVRQEEHIELIASENYTSPRVMQAQGSQLTNKYAEGYPGKRYYGGCEYVDIVEQLAIDRAKELFGADYANVQPHSGSQANFAVYTALLEPGDTVLGMNLAHGGHLTHGSPVNFSGKLYNIVPYGIDATGHIDYADLEKQAKEHKPKMIIGGFSAYSGVVDWAKMREIADSIGAYLFVDMAHVAGLVAAGVYPNPVPHAHVVTTTTHKTLAGPRGGLILAKGGSEELYKKLNSAVFPGGQGGPLMHVIAGKAVALKEAMEPEFKTYQQQVAKNAKAMVEVFLERGYKVVSGGTDNHLFLVDLVDKNLTGKEADAALGRANITVNKNSVPNDPKSPFVTSGIRVGTPAITRRGFKEAEAKELAGWMCDVLDSINDEAVIERIKGKVLDICARYPVYA</sequence>
<dbReference type="EC" id="2.1.2.1" evidence="1"/>
<dbReference type="EMBL" id="CP000243">
    <property type="protein sequence ID" value="ABE08330.1"/>
    <property type="status" value="ALT_INIT"/>
    <property type="molecule type" value="Genomic_DNA"/>
</dbReference>
<dbReference type="RefSeq" id="WP_000919159.1">
    <property type="nucleotide sequence ID" value="NZ_CP064825.1"/>
</dbReference>
<dbReference type="SMR" id="Q1R8I4"/>
<dbReference type="GeneID" id="89517346"/>
<dbReference type="KEGG" id="eci:UTI89_C2870"/>
<dbReference type="HOGENOM" id="CLU_022477_2_1_6"/>
<dbReference type="UniPathway" id="UPA00193"/>
<dbReference type="UniPathway" id="UPA00288">
    <property type="reaction ID" value="UER01023"/>
</dbReference>
<dbReference type="Proteomes" id="UP000001952">
    <property type="component" value="Chromosome"/>
</dbReference>
<dbReference type="GO" id="GO:0005829">
    <property type="term" value="C:cytosol"/>
    <property type="evidence" value="ECO:0007669"/>
    <property type="project" value="TreeGrafter"/>
</dbReference>
<dbReference type="GO" id="GO:0004372">
    <property type="term" value="F:glycine hydroxymethyltransferase activity"/>
    <property type="evidence" value="ECO:0007669"/>
    <property type="project" value="UniProtKB-UniRule"/>
</dbReference>
<dbReference type="GO" id="GO:0030170">
    <property type="term" value="F:pyridoxal phosphate binding"/>
    <property type="evidence" value="ECO:0007669"/>
    <property type="project" value="UniProtKB-UniRule"/>
</dbReference>
<dbReference type="GO" id="GO:0019264">
    <property type="term" value="P:glycine biosynthetic process from serine"/>
    <property type="evidence" value="ECO:0007669"/>
    <property type="project" value="UniProtKB-UniRule"/>
</dbReference>
<dbReference type="GO" id="GO:0035999">
    <property type="term" value="P:tetrahydrofolate interconversion"/>
    <property type="evidence" value="ECO:0007669"/>
    <property type="project" value="UniProtKB-UniRule"/>
</dbReference>
<dbReference type="CDD" id="cd00378">
    <property type="entry name" value="SHMT"/>
    <property type="match status" value="1"/>
</dbReference>
<dbReference type="FunFam" id="3.40.640.10:FF:000001">
    <property type="entry name" value="Serine hydroxymethyltransferase"/>
    <property type="match status" value="1"/>
</dbReference>
<dbReference type="FunFam" id="3.90.1150.10:FF:000003">
    <property type="entry name" value="Serine hydroxymethyltransferase"/>
    <property type="match status" value="1"/>
</dbReference>
<dbReference type="Gene3D" id="3.90.1150.10">
    <property type="entry name" value="Aspartate Aminotransferase, domain 1"/>
    <property type="match status" value="1"/>
</dbReference>
<dbReference type="Gene3D" id="3.40.640.10">
    <property type="entry name" value="Type I PLP-dependent aspartate aminotransferase-like (Major domain)"/>
    <property type="match status" value="1"/>
</dbReference>
<dbReference type="HAMAP" id="MF_00051">
    <property type="entry name" value="SHMT"/>
    <property type="match status" value="1"/>
</dbReference>
<dbReference type="InterPro" id="IPR015424">
    <property type="entry name" value="PyrdxlP-dep_Trfase"/>
</dbReference>
<dbReference type="InterPro" id="IPR015421">
    <property type="entry name" value="PyrdxlP-dep_Trfase_major"/>
</dbReference>
<dbReference type="InterPro" id="IPR015422">
    <property type="entry name" value="PyrdxlP-dep_Trfase_small"/>
</dbReference>
<dbReference type="InterPro" id="IPR001085">
    <property type="entry name" value="Ser_HO-MeTrfase"/>
</dbReference>
<dbReference type="InterPro" id="IPR049943">
    <property type="entry name" value="Ser_HO-MeTrfase-like"/>
</dbReference>
<dbReference type="InterPro" id="IPR019798">
    <property type="entry name" value="Ser_HO-MeTrfase_PLP_BS"/>
</dbReference>
<dbReference type="InterPro" id="IPR039429">
    <property type="entry name" value="SHMT-like_dom"/>
</dbReference>
<dbReference type="NCBIfam" id="NF000586">
    <property type="entry name" value="PRK00011.1"/>
    <property type="match status" value="1"/>
</dbReference>
<dbReference type="PANTHER" id="PTHR11680">
    <property type="entry name" value="SERINE HYDROXYMETHYLTRANSFERASE"/>
    <property type="match status" value="1"/>
</dbReference>
<dbReference type="PANTHER" id="PTHR11680:SF50">
    <property type="entry name" value="SERINE HYDROXYMETHYLTRANSFERASE"/>
    <property type="match status" value="1"/>
</dbReference>
<dbReference type="Pfam" id="PF00464">
    <property type="entry name" value="SHMT"/>
    <property type="match status" value="1"/>
</dbReference>
<dbReference type="PIRSF" id="PIRSF000412">
    <property type="entry name" value="SHMT"/>
    <property type="match status" value="1"/>
</dbReference>
<dbReference type="SUPFAM" id="SSF53383">
    <property type="entry name" value="PLP-dependent transferases"/>
    <property type="match status" value="1"/>
</dbReference>
<dbReference type="PROSITE" id="PS00096">
    <property type="entry name" value="SHMT"/>
    <property type="match status" value="1"/>
</dbReference>
<organism>
    <name type="scientific">Escherichia coli (strain UTI89 / UPEC)</name>
    <dbReference type="NCBI Taxonomy" id="364106"/>
    <lineage>
        <taxon>Bacteria</taxon>
        <taxon>Pseudomonadati</taxon>
        <taxon>Pseudomonadota</taxon>
        <taxon>Gammaproteobacteria</taxon>
        <taxon>Enterobacterales</taxon>
        <taxon>Enterobacteriaceae</taxon>
        <taxon>Escherichia</taxon>
    </lineage>
</organism>
<reference key="1">
    <citation type="journal article" date="2006" name="Proc. Natl. Acad. Sci. U.S.A.">
        <title>Identification of genes subject to positive selection in uropathogenic strains of Escherichia coli: a comparative genomics approach.</title>
        <authorList>
            <person name="Chen S.L."/>
            <person name="Hung C.-S."/>
            <person name="Xu J."/>
            <person name="Reigstad C.S."/>
            <person name="Magrini V."/>
            <person name="Sabo A."/>
            <person name="Blasiar D."/>
            <person name="Bieri T."/>
            <person name="Meyer R.R."/>
            <person name="Ozersky P."/>
            <person name="Armstrong J.R."/>
            <person name="Fulton R.S."/>
            <person name="Latreille J.P."/>
            <person name="Spieth J."/>
            <person name="Hooton T.M."/>
            <person name="Mardis E.R."/>
            <person name="Hultgren S.J."/>
            <person name="Gordon J.I."/>
        </authorList>
    </citation>
    <scope>NUCLEOTIDE SEQUENCE [LARGE SCALE GENOMIC DNA]</scope>
    <source>
        <strain>UTI89 / UPEC</strain>
    </source>
</reference>
<protein>
    <recommendedName>
        <fullName evidence="1">Serine hydroxymethyltransferase</fullName>
        <shortName evidence="1">SHMT</shortName>
        <shortName evidence="1">Serine methylase</shortName>
        <ecNumber evidence="1">2.1.2.1</ecNumber>
    </recommendedName>
</protein>
<keyword id="KW-0007">Acetylation</keyword>
<keyword id="KW-0028">Amino-acid biosynthesis</keyword>
<keyword id="KW-0963">Cytoplasm</keyword>
<keyword id="KW-0554">One-carbon metabolism</keyword>
<keyword id="KW-0663">Pyridoxal phosphate</keyword>
<keyword id="KW-0808">Transferase</keyword>
<proteinExistence type="inferred from homology"/>